<keyword id="KW-0535">Nitrogen fixation</keyword>
<keyword id="KW-1185">Reference proteome</keyword>
<keyword id="KW-0808">Transferase</keyword>
<protein>
    <recommendedName>
        <fullName>Homocitrate synthase 2</fullName>
        <ecNumber>2.3.3.14</ecNumber>
    </recommendedName>
</protein>
<reference key="1">
    <citation type="journal article" date="2001" name="DNA Res.">
        <title>Complete genomic sequence of the filamentous nitrogen-fixing cyanobacterium Anabaena sp. strain PCC 7120.</title>
        <authorList>
            <person name="Kaneko T."/>
            <person name="Nakamura Y."/>
            <person name="Wolk C.P."/>
            <person name="Kuritz T."/>
            <person name="Sasamoto S."/>
            <person name="Watanabe A."/>
            <person name="Iriguchi M."/>
            <person name="Ishikawa A."/>
            <person name="Kawashima K."/>
            <person name="Kimura T."/>
            <person name="Kishida Y."/>
            <person name="Kohara M."/>
            <person name="Matsumoto M."/>
            <person name="Matsuno A."/>
            <person name="Muraki A."/>
            <person name="Nakazaki N."/>
            <person name="Shimpo S."/>
            <person name="Sugimoto M."/>
            <person name="Takazawa M."/>
            <person name="Yamada M."/>
            <person name="Yasuda M."/>
            <person name="Tabata S."/>
        </authorList>
    </citation>
    <scope>NUCLEOTIDE SEQUENCE [LARGE SCALE GENOMIC DNA]</scope>
    <source>
        <strain>PCC 7120 / SAG 25.82 / UTEX 2576</strain>
    </source>
</reference>
<gene>
    <name type="primary">nifV2</name>
    <name type="ordered locus">alr2968</name>
</gene>
<dbReference type="EC" id="2.3.3.14"/>
<dbReference type="EMBL" id="BA000019">
    <property type="protein sequence ID" value="BAB74667.1"/>
    <property type="molecule type" value="Genomic_DNA"/>
</dbReference>
<dbReference type="PIR" id="AI2176">
    <property type="entry name" value="AI2176"/>
</dbReference>
<dbReference type="SMR" id="P58637"/>
<dbReference type="STRING" id="103690.gene:10495004"/>
<dbReference type="KEGG" id="ana:alr2968"/>
<dbReference type="eggNOG" id="COG0119">
    <property type="taxonomic scope" value="Bacteria"/>
</dbReference>
<dbReference type="OrthoDB" id="570404at2"/>
<dbReference type="BRENDA" id="2.3.3.14">
    <property type="organism ID" value="8113"/>
</dbReference>
<dbReference type="Proteomes" id="UP000002483">
    <property type="component" value="Chromosome"/>
</dbReference>
<dbReference type="GO" id="GO:0004410">
    <property type="term" value="F:homocitrate synthase activity"/>
    <property type="evidence" value="ECO:0007669"/>
    <property type="project" value="UniProtKB-EC"/>
</dbReference>
<dbReference type="GO" id="GO:0009058">
    <property type="term" value="P:biosynthetic process"/>
    <property type="evidence" value="ECO:0007669"/>
    <property type="project" value="UniProtKB-ARBA"/>
</dbReference>
<dbReference type="GO" id="GO:0019752">
    <property type="term" value="P:carboxylic acid metabolic process"/>
    <property type="evidence" value="ECO:0007669"/>
    <property type="project" value="InterPro"/>
</dbReference>
<dbReference type="GO" id="GO:0009399">
    <property type="term" value="P:nitrogen fixation"/>
    <property type="evidence" value="ECO:0007669"/>
    <property type="project" value="UniProtKB-KW"/>
</dbReference>
<dbReference type="CDD" id="cd07939">
    <property type="entry name" value="DRE_TIM_NifV"/>
    <property type="match status" value="1"/>
</dbReference>
<dbReference type="FunFam" id="1.10.238.260:FF:000001">
    <property type="entry name" value="2-isopropylmalate synthase"/>
    <property type="match status" value="1"/>
</dbReference>
<dbReference type="Gene3D" id="1.10.238.260">
    <property type="match status" value="1"/>
</dbReference>
<dbReference type="Gene3D" id="3.20.20.70">
    <property type="entry name" value="Aldolase class I"/>
    <property type="match status" value="1"/>
</dbReference>
<dbReference type="InterPro" id="IPR002034">
    <property type="entry name" value="AIPM/Hcit_synth_CS"/>
</dbReference>
<dbReference type="InterPro" id="IPR013785">
    <property type="entry name" value="Aldolase_TIM"/>
</dbReference>
<dbReference type="InterPro" id="IPR054691">
    <property type="entry name" value="LeuA/HCS_post-cat"/>
</dbReference>
<dbReference type="InterPro" id="IPR013477">
    <property type="entry name" value="NifV/FrbC"/>
</dbReference>
<dbReference type="InterPro" id="IPR000891">
    <property type="entry name" value="PYR_CT"/>
</dbReference>
<dbReference type="NCBIfam" id="TIGR02660">
    <property type="entry name" value="nifV_homocitr"/>
    <property type="match status" value="1"/>
</dbReference>
<dbReference type="PANTHER" id="PTHR42880">
    <property type="entry name" value="HOMOCITRATE SYNTHASE"/>
    <property type="match status" value="1"/>
</dbReference>
<dbReference type="PANTHER" id="PTHR42880:SF1">
    <property type="entry name" value="ISOPROPYLMALATE_HOMOCITRATE_CITRAMALATE SYNTHASE FAMILY PROTEIN"/>
    <property type="match status" value="1"/>
</dbReference>
<dbReference type="Pfam" id="PF22617">
    <property type="entry name" value="HCS_D2"/>
    <property type="match status" value="1"/>
</dbReference>
<dbReference type="Pfam" id="PF00682">
    <property type="entry name" value="HMGL-like"/>
    <property type="match status" value="1"/>
</dbReference>
<dbReference type="SUPFAM" id="SSF51569">
    <property type="entry name" value="Aldolase"/>
    <property type="match status" value="1"/>
</dbReference>
<dbReference type="PROSITE" id="PS00815">
    <property type="entry name" value="AIPM_HOMOCIT_SYNTH_1"/>
    <property type="match status" value="1"/>
</dbReference>
<dbReference type="PROSITE" id="PS00816">
    <property type="entry name" value="AIPM_HOMOCIT_SYNTH_2"/>
    <property type="match status" value="1"/>
</dbReference>
<dbReference type="PROSITE" id="PS50991">
    <property type="entry name" value="PYR_CT"/>
    <property type="match status" value="1"/>
</dbReference>
<sequence length="376" mass="40937">MNKVLINDTTLRDGEQAAGVAFSVEEKIAIAKFLDAIGVHEIEVGIPAMGKAEQEAIANIVKLDLSANLLGWNRAVIADIQASIACGLQRVHISIPVSAIQIAVKFHGQWQVVLQKLHDSISFAVDQGLFVSIGGEDSSRAEESFLLDVVLAAQEWGASRFRFCDTVGILDPFTTHAKVKQLVASLTIPVEMHTHNDFGLATANALAGTKAGALSVNTTVNGLGERAGNAALEEVVMALKHLYHHDLGIDTRRLLEISQLVASASGHPVPPWKAIVGENTFAHESGIHAHGVLQNPQTYEPFAPEEVGRERRLVVGKHSGRHLLSSILQQHDIILNHEETQFVLDAVRQESVEKKRSLTDQELLHLVQTKQHFRAC</sequence>
<organism>
    <name type="scientific">Nostoc sp. (strain PCC 7120 / SAG 25.82 / UTEX 2576)</name>
    <dbReference type="NCBI Taxonomy" id="103690"/>
    <lineage>
        <taxon>Bacteria</taxon>
        <taxon>Bacillati</taxon>
        <taxon>Cyanobacteriota</taxon>
        <taxon>Cyanophyceae</taxon>
        <taxon>Nostocales</taxon>
        <taxon>Nostocaceae</taxon>
        <taxon>Nostoc</taxon>
    </lineage>
</organism>
<proteinExistence type="inferred from homology"/>
<feature type="chain" id="PRO_0000140457" description="Homocitrate synthase 2">
    <location>
        <begin position="1"/>
        <end position="376"/>
    </location>
</feature>
<feature type="domain" description="Pyruvate carboxyltransferase" evidence="1">
    <location>
        <begin position="4"/>
        <end position="255"/>
    </location>
</feature>
<comment type="function">
    <text>This protein is a Fe-Mo-cofactor biosynthetic component.</text>
</comment>
<comment type="catalytic activity">
    <reaction>
        <text>acetyl-CoA + 2-oxoglutarate + H2O = (2R)-homocitrate + CoA + H(+)</text>
        <dbReference type="Rhea" id="RHEA:12929"/>
        <dbReference type="ChEBI" id="CHEBI:15377"/>
        <dbReference type="ChEBI" id="CHEBI:15378"/>
        <dbReference type="ChEBI" id="CHEBI:16810"/>
        <dbReference type="ChEBI" id="CHEBI:57287"/>
        <dbReference type="ChEBI" id="CHEBI:57288"/>
        <dbReference type="ChEBI" id="CHEBI:58884"/>
        <dbReference type="EC" id="2.3.3.14"/>
    </reaction>
</comment>
<comment type="similarity">
    <text evidence="2">Belongs to the alpha-IPM synthase/homocitrate synthase family.</text>
</comment>
<name>NIFV2_NOSS1</name>
<accession>P58637</accession>
<evidence type="ECO:0000255" key="1">
    <source>
        <dbReference type="PROSITE-ProRule" id="PRU01151"/>
    </source>
</evidence>
<evidence type="ECO:0000305" key="2"/>